<evidence type="ECO:0000255" key="1">
    <source>
        <dbReference type="HAMAP-Rule" id="MF_01347"/>
    </source>
</evidence>
<proteinExistence type="inferred from homology"/>
<feature type="chain" id="PRO_1000143470" description="ATP synthase subunit beta">
    <location>
        <begin position="1"/>
        <end position="473"/>
    </location>
</feature>
<feature type="binding site" evidence="1">
    <location>
        <begin position="158"/>
        <end position="165"/>
    </location>
    <ligand>
        <name>ATP</name>
        <dbReference type="ChEBI" id="CHEBI:30616"/>
    </ligand>
</feature>
<protein>
    <recommendedName>
        <fullName evidence="1">ATP synthase subunit beta</fullName>
        <ecNumber evidence="1">7.1.2.2</ecNumber>
    </recommendedName>
    <alternativeName>
        <fullName evidence="1">ATP synthase F1 sector subunit beta</fullName>
    </alternativeName>
    <alternativeName>
        <fullName evidence="1">F-ATPase subunit beta</fullName>
    </alternativeName>
</protein>
<comment type="function">
    <text evidence="1">Produces ATP from ADP in the presence of a proton gradient across the membrane. The catalytic sites are hosted primarily by the beta subunits.</text>
</comment>
<comment type="catalytic activity">
    <reaction evidence="1">
        <text>ATP + H2O + 4 H(+)(in) = ADP + phosphate + 5 H(+)(out)</text>
        <dbReference type="Rhea" id="RHEA:57720"/>
        <dbReference type="ChEBI" id="CHEBI:15377"/>
        <dbReference type="ChEBI" id="CHEBI:15378"/>
        <dbReference type="ChEBI" id="CHEBI:30616"/>
        <dbReference type="ChEBI" id="CHEBI:43474"/>
        <dbReference type="ChEBI" id="CHEBI:456216"/>
        <dbReference type="EC" id="7.1.2.2"/>
    </reaction>
</comment>
<comment type="subunit">
    <text evidence="1">F-type ATPases have 2 components, CF(1) - the catalytic core - and CF(0) - the membrane proton channel. CF(1) has five subunits: alpha(3), beta(3), gamma(1), delta(1), epsilon(1). CF(0) has three main subunits: a(1), b(2) and c(9-12). The alpha and beta chains form an alternating ring which encloses part of the gamma chain. CF(1) is attached to CF(0) by a central stalk formed by the gamma and epsilon chains, while a peripheral stalk is formed by the delta and b chains.</text>
</comment>
<comment type="subcellular location">
    <subcellularLocation>
        <location evidence="1">Cell membrane</location>
        <topology evidence="1">Peripheral membrane protein</topology>
    </subcellularLocation>
</comment>
<comment type="similarity">
    <text evidence="1">Belongs to the ATPase alpha/beta chains family.</text>
</comment>
<dbReference type="EC" id="7.1.2.2" evidence="1"/>
<dbReference type="EMBL" id="CP000922">
    <property type="protein sequence ID" value="ACJ35055.1"/>
    <property type="molecule type" value="Genomic_DNA"/>
</dbReference>
<dbReference type="RefSeq" id="WP_004893005.1">
    <property type="nucleotide sequence ID" value="NC_011567.1"/>
</dbReference>
<dbReference type="SMR" id="B7GMF3"/>
<dbReference type="STRING" id="491915.Aflv_2702"/>
<dbReference type="GeneID" id="7038975"/>
<dbReference type="KEGG" id="afl:Aflv_2702"/>
<dbReference type="eggNOG" id="COG0055">
    <property type="taxonomic scope" value="Bacteria"/>
</dbReference>
<dbReference type="HOGENOM" id="CLU_022398_0_2_9"/>
<dbReference type="Proteomes" id="UP000000742">
    <property type="component" value="Chromosome"/>
</dbReference>
<dbReference type="GO" id="GO:0005886">
    <property type="term" value="C:plasma membrane"/>
    <property type="evidence" value="ECO:0007669"/>
    <property type="project" value="UniProtKB-SubCell"/>
</dbReference>
<dbReference type="GO" id="GO:0045259">
    <property type="term" value="C:proton-transporting ATP synthase complex"/>
    <property type="evidence" value="ECO:0007669"/>
    <property type="project" value="UniProtKB-KW"/>
</dbReference>
<dbReference type="GO" id="GO:0005524">
    <property type="term" value="F:ATP binding"/>
    <property type="evidence" value="ECO:0007669"/>
    <property type="project" value="UniProtKB-UniRule"/>
</dbReference>
<dbReference type="GO" id="GO:0016887">
    <property type="term" value="F:ATP hydrolysis activity"/>
    <property type="evidence" value="ECO:0007669"/>
    <property type="project" value="InterPro"/>
</dbReference>
<dbReference type="GO" id="GO:0046933">
    <property type="term" value="F:proton-transporting ATP synthase activity, rotational mechanism"/>
    <property type="evidence" value="ECO:0007669"/>
    <property type="project" value="UniProtKB-UniRule"/>
</dbReference>
<dbReference type="CDD" id="cd18110">
    <property type="entry name" value="ATP-synt_F1_beta_C"/>
    <property type="match status" value="1"/>
</dbReference>
<dbReference type="CDD" id="cd18115">
    <property type="entry name" value="ATP-synt_F1_beta_N"/>
    <property type="match status" value="1"/>
</dbReference>
<dbReference type="CDD" id="cd01133">
    <property type="entry name" value="F1-ATPase_beta_CD"/>
    <property type="match status" value="1"/>
</dbReference>
<dbReference type="FunFam" id="1.10.1140.10:FF:000001">
    <property type="entry name" value="ATP synthase subunit beta"/>
    <property type="match status" value="1"/>
</dbReference>
<dbReference type="FunFam" id="2.40.10.170:FF:000005">
    <property type="entry name" value="ATP synthase subunit beta"/>
    <property type="match status" value="1"/>
</dbReference>
<dbReference type="FunFam" id="3.40.50.300:FF:000004">
    <property type="entry name" value="ATP synthase subunit beta"/>
    <property type="match status" value="1"/>
</dbReference>
<dbReference type="Gene3D" id="2.40.10.170">
    <property type="match status" value="1"/>
</dbReference>
<dbReference type="Gene3D" id="1.10.1140.10">
    <property type="entry name" value="Bovine Mitochondrial F1-atpase, Atp Synthase Beta Chain, Chain D, domain 3"/>
    <property type="match status" value="1"/>
</dbReference>
<dbReference type="Gene3D" id="3.40.50.300">
    <property type="entry name" value="P-loop containing nucleotide triphosphate hydrolases"/>
    <property type="match status" value="1"/>
</dbReference>
<dbReference type="HAMAP" id="MF_01347">
    <property type="entry name" value="ATP_synth_beta_bact"/>
    <property type="match status" value="1"/>
</dbReference>
<dbReference type="InterPro" id="IPR003593">
    <property type="entry name" value="AAA+_ATPase"/>
</dbReference>
<dbReference type="InterPro" id="IPR055190">
    <property type="entry name" value="ATP-synt_VA_C"/>
</dbReference>
<dbReference type="InterPro" id="IPR005722">
    <property type="entry name" value="ATP_synth_F1_bsu"/>
</dbReference>
<dbReference type="InterPro" id="IPR020003">
    <property type="entry name" value="ATPase_a/bsu_AS"/>
</dbReference>
<dbReference type="InterPro" id="IPR050053">
    <property type="entry name" value="ATPase_alpha/beta_chains"/>
</dbReference>
<dbReference type="InterPro" id="IPR004100">
    <property type="entry name" value="ATPase_F1/V1/A1_a/bsu_N"/>
</dbReference>
<dbReference type="InterPro" id="IPR036121">
    <property type="entry name" value="ATPase_F1/V1/A1_a/bsu_N_sf"/>
</dbReference>
<dbReference type="InterPro" id="IPR000194">
    <property type="entry name" value="ATPase_F1/V1/A1_a/bsu_nucl-bd"/>
</dbReference>
<dbReference type="InterPro" id="IPR024034">
    <property type="entry name" value="ATPase_F1/V1_b/a_C"/>
</dbReference>
<dbReference type="InterPro" id="IPR027417">
    <property type="entry name" value="P-loop_NTPase"/>
</dbReference>
<dbReference type="NCBIfam" id="TIGR01039">
    <property type="entry name" value="atpD"/>
    <property type="match status" value="1"/>
</dbReference>
<dbReference type="PANTHER" id="PTHR15184">
    <property type="entry name" value="ATP SYNTHASE"/>
    <property type="match status" value="1"/>
</dbReference>
<dbReference type="PANTHER" id="PTHR15184:SF71">
    <property type="entry name" value="ATP SYNTHASE SUBUNIT BETA, MITOCHONDRIAL"/>
    <property type="match status" value="1"/>
</dbReference>
<dbReference type="Pfam" id="PF00006">
    <property type="entry name" value="ATP-synt_ab"/>
    <property type="match status" value="1"/>
</dbReference>
<dbReference type="Pfam" id="PF02874">
    <property type="entry name" value="ATP-synt_ab_N"/>
    <property type="match status" value="1"/>
</dbReference>
<dbReference type="Pfam" id="PF22919">
    <property type="entry name" value="ATP-synt_VA_C"/>
    <property type="match status" value="1"/>
</dbReference>
<dbReference type="SMART" id="SM00382">
    <property type="entry name" value="AAA"/>
    <property type="match status" value="1"/>
</dbReference>
<dbReference type="SUPFAM" id="SSF47917">
    <property type="entry name" value="C-terminal domain of alpha and beta subunits of F1 ATP synthase"/>
    <property type="match status" value="1"/>
</dbReference>
<dbReference type="SUPFAM" id="SSF50615">
    <property type="entry name" value="N-terminal domain of alpha and beta subunits of F1 ATP synthase"/>
    <property type="match status" value="1"/>
</dbReference>
<dbReference type="SUPFAM" id="SSF52540">
    <property type="entry name" value="P-loop containing nucleoside triphosphate hydrolases"/>
    <property type="match status" value="1"/>
</dbReference>
<dbReference type="PROSITE" id="PS00152">
    <property type="entry name" value="ATPASE_ALPHA_BETA"/>
    <property type="match status" value="1"/>
</dbReference>
<name>ATPB_ANOFW</name>
<keyword id="KW-0066">ATP synthesis</keyword>
<keyword id="KW-0067">ATP-binding</keyword>
<keyword id="KW-1003">Cell membrane</keyword>
<keyword id="KW-0139">CF(1)</keyword>
<keyword id="KW-0375">Hydrogen ion transport</keyword>
<keyword id="KW-0406">Ion transport</keyword>
<keyword id="KW-0472">Membrane</keyword>
<keyword id="KW-0547">Nucleotide-binding</keyword>
<keyword id="KW-1278">Translocase</keyword>
<keyword id="KW-0813">Transport</keyword>
<sequence length="473" mass="51952">MAKGRVIQVMGPVVDVKFEDGHLPAIYNALKIKHKARNEKEVDIDLTLEVALHLGDDTVRTIAMSTTDGLVRGMEVIDTGAPISVPVGEVTLGRVFNVLGEPIDLGEEIPADARRDAIHRPAPKFEQLSTQVEILETGIKVVDLLAPYIKGGKIGLFGGAGVGKTVLIQELINNIAQEHGGISVFAGVGERTREGNDLYHEMKDSGVINKTAMVFGQMNEPPGARMRVALTGLTMAEYFRDEQGQDVLFFIDNIFRFTQAGSEVSALLGRMPSAVGYQPTLATEMGQLQERITSTAVGSVTSIQAIYVPADDYTDPAPATTFAHLDATTNLERKLSEMGIYPAVDPLASTSRALSPEIVGEEHYQVARKVQQTLQRYKELQDIIAILGMDELSEEDKLVVHRARRIQFFLSQNFHVAEQFTGQPGSYVPVKETVRGFKEILEGKYDHLPEDAFRLVGRIEEVIEKARKMGVEV</sequence>
<organism>
    <name type="scientific">Anoxybacillus flavithermus (strain DSM 21510 / WK1)</name>
    <dbReference type="NCBI Taxonomy" id="491915"/>
    <lineage>
        <taxon>Bacteria</taxon>
        <taxon>Bacillati</taxon>
        <taxon>Bacillota</taxon>
        <taxon>Bacilli</taxon>
        <taxon>Bacillales</taxon>
        <taxon>Anoxybacillaceae</taxon>
        <taxon>Anoxybacillus</taxon>
    </lineage>
</organism>
<gene>
    <name evidence="1" type="primary">atpD</name>
    <name type="ordered locus">Aflv_2702</name>
</gene>
<accession>B7GMF3</accession>
<reference key="1">
    <citation type="journal article" date="2008" name="Genome Biol.">
        <title>Encapsulated in silica: genome, proteome and physiology of the thermophilic bacterium Anoxybacillus flavithermus WK1.</title>
        <authorList>
            <person name="Saw J.H."/>
            <person name="Mountain B.W."/>
            <person name="Feng L."/>
            <person name="Omelchenko M.V."/>
            <person name="Hou S."/>
            <person name="Saito J.A."/>
            <person name="Stott M.B."/>
            <person name="Li D."/>
            <person name="Zhao G."/>
            <person name="Wu J."/>
            <person name="Galperin M.Y."/>
            <person name="Koonin E.V."/>
            <person name="Makarova K.S."/>
            <person name="Wolf Y.I."/>
            <person name="Rigden D.J."/>
            <person name="Dunfield P.F."/>
            <person name="Wang L."/>
            <person name="Alam M."/>
        </authorList>
    </citation>
    <scope>NUCLEOTIDE SEQUENCE [LARGE SCALE GENOMIC DNA]</scope>
    <source>
        <strain>DSM 21510 / WK1</strain>
    </source>
</reference>